<comment type="function">
    <text evidence="1">Component of the dark-operative protochlorophyllide reductase (DPOR) that uses Mg-ATP and reduced ferredoxin to reduce ring D of protochlorophyllide (Pchlide) to form chlorophyllide a (Chlide). This reaction is light-independent. The NB-protein (ChlN-ChlB) is the catalytic component of the complex.</text>
</comment>
<comment type="catalytic activity">
    <reaction evidence="1">
        <text>chlorophyllide a + oxidized 2[4Fe-4S]-[ferredoxin] + 2 ADP + 2 phosphate = protochlorophyllide a + reduced 2[4Fe-4S]-[ferredoxin] + 2 ATP + 2 H2O</text>
        <dbReference type="Rhea" id="RHEA:28202"/>
        <dbReference type="Rhea" id="RHEA-COMP:10002"/>
        <dbReference type="Rhea" id="RHEA-COMP:10004"/>
        <dbReference type="ChEBI" id="CHEBI:15377"/>
        <dbReference type="ChEBI" id="CHEBI:30616"/>
        <dbReference type="ChEBI" id="CHEBI:33722"/>
        <dbReference type="ChEBI" id="CHEBI:33723"/>
        <dbReference type="ChEBI" id="CHEBI:43474"/>
        <dbReference type="ChEBI" id="CHEBI:83348"/>
        <dbReference type="ChEBI" id="CHEBI:83350"/>
        <dbReference type="ChEBI" id="CHEBI:456216"/>
        <dbReference type="EC" id="1.3.7.7"/>
    </reaction>
</comment>
<comment type="cofactor">
    <cofactor evidence="1">
        <name>[4Fe-4S] cluster</name>
        <dbReference type="ChEBI" id="CHEBI:49883"/>
    </cofactor>
    <text evidence="1">Binds 1 [4Fe-4S] cluster per heterodimer. The cluster is bound at the heterodimer interface by residues from both subunits.</text>
</comment>
<comment type="pathway">
    <text evidence="1">Porphyrin-containing compound metabolism; chlorophyll biosynthesis (light-independent).</text>
</comment>
<comment type="subunit">
    <text evidence="1">Protochlorophyllide reductase is composed of three subunits; ChlL, ChlN and ChlB. Forms a heterotetramer of two ChlB and two ChlN subunits.</text>
</comment>
<comment type="similarity">
    <text evidence="1">Belongs to the BchN/ChlN family.</text>
</comment>
<gene>
    <name evidence="1" type="primary">chlN</name>
    <name type="ordered locus">P9515_06091</name>
</gene>
<reference key="1">
    <citation type="journal article" date="2007" name="PLoS Genet.">
        <title>Patterns and implications of gene gain and loss in the evolution of Prochlorococcus.</title>
        <authorList>
            <person name="Kettler G.C."/>
            <person name="Martiny A.C."/>
            <person name="Huang K."/>
            <person name="Zucker J."/>
            <person name="Coleman M.L."/>
            <person name="Rodrigue S."/>
            <person name="Chen F."/>
            <person name="Lapidus A."/>
            <person name="Ferriera S."/>
            <person name="Johnson J."/>
            <person name="Steglich C."/>
            <person name="Church G.M."/>
            <person name="Richardson P."/>
            <person name="Chisholm S.W."/>
        </authorList>
    </citation>
    <scope>NUCLEOTIDE SEQUENCE [LARGE SCALE GENOMIC DNA]</scope>
    <source>
        <strain>MIT 9515</strain>
    </source>
</reference>
<feature type="chain" id="PRO_0000324015" description="Light-independent protochlorophyllide reductase subunit N">
    <location>
        <begin position="1"/>
        <end position="418"/>
    </location>
</feature>
<feature type="binding site" evidence="1">
    <location>
        <position position="17"/>
    </location>
    <ligand>
        <name>[4Fe-4S] cluster</name>
        <dbReference type="ChEBI" id="CHEBI:49883"/>
        <note>ligand shared with heterodimeric partner</note>
    </ligand>
</feature>
<feature type="binding site" evidence="1">
    <location>
        <position position="42"/>
    </location>
    <ligand>
        <name>[4Fe-4S] cluster</name>
        <dbReference type="ChEBI" id="CHEBI:49883"/>
        <note>ligand shared with heterodimeric partner</note>
    </ligand>
</feature>
<feature type="binding site" evidence="1">
    <location>
        <position position="103"/>
    </location>
    <ligand>
        <name>[4Fe-4S] cluster</name>
        <dbReference type="ChEBI" id="CHEBI:49883"/>
        <note>ligand shared with heterodimeric partner</note>
    </ligand>
</feature>
<accession>A2BVK7</accession>
<proteinExistence type="inferred from homology"/>
<organism>
    <name type="scientific">Prochlorococcus marinus (strain MIT 9515)</name>
    <dbReference type="NCBI Taxonomy" id="167542"/>
    <lineage>
        <taxon>Bacteria</taxon>
        <taxon>Bacillati</taxon>
        <taxon>Cyanobacteriota</taxon>
        <taxon>Cyanophyceae</taxon>
        <taxon>Synechococcales</taxon>
        <taxon>Prochlorococcaceae</taxon>
        <taxon>Prochlorococcus</taxon>
    </lineage>
</organism>
<keyword id="KW-0004">4Fe-4S</keyword>
<keyword id="KW-0067">ATP-binding</keyword>
<keyword id="KW-0149">Chlorophyll biosynthesis</keyword>
<keyword id="KW-0408">Iron</keyword>
<keyword id="KW-0411">Iron-sulfur</keyword>
<keyword id="KW-0479">Metal-binding</keyword>
<keyword id="KW-0547">Nucleotide-binding</keyword>
<keyword id="KW-0560">Oxidoreductase</keyword>
<keyword id="KW-0602">Photosynthesis</keyword>
<name>CHLN_PROM5</name>
<sequence length="418" mass="46447">MSKVDFNKETGPREVFCGLTSIVWLHRRMPDAFFLVVGSRTCAHLIQSAAGVMIFAEPRFGTAILEEKDLAGLADAHEELDRVVNDLISRRPEIKTLFLVGSCPSEVIKLDLATVAEKLNLRFSGQVRFVNYSGSGIETTFTQGEDGALKALIPLMNSTDDEKLLLVGTIANNVEDRFKKIFNSIGINNVESFPPRQSTELPKIGKNTKVILTQPYLSDTVRDLKHRGCEIIYAPFPLGVEGSTKWVLAAAAAFKIPELKVHEVIAPLANRARQALQKHTEILRGKKLFLLPESQLEISLARFLHNECEMELIEVGTPYLNKDLMEEELNLLPDDTKIVEGQHVEKQLDRVRASCPDLVVCGMGLANPLEAEGISTKWSIEMVFSPIHGIDQAADLAELFSRPLTRNQILTSKTLATY</sequence>
<protein>
    <recommendedName>
        <fullName evidence="1">Light-independent protochlorophyllide reductase subunit N</fullName>
        <shortName evidence="1">DPOR subunit N</shortName>
        <shortName evidence="1">LI-POR subunit N</shortName>
        <ecNumber evidence="1">1.3.7.7</ecNumber>
    </recommendedName>
</protein>
<evidence type="ECO:0000255" key="1">
    <source>
        <dbReference type="HAMAP-Rule" id="MF_00352"/>
    </source>
</evidence>
<dbReference type="EC" id="1.3.7.7" evidence="1"/>
<dbReference type="EMBL" id="CP000552">
    <property type="protein sequence ID" value="ABM71818.1"/>
    <property type="molecule type" value="Genomic_DNA"/>
</dbReference>
<dbReference type="RefSeq" id="WP_011819925.1">
    <property type="nucleotide sequence ID" value="NC_008817.1"/>
</dbReference>
<dbReference type="SMR" id="A2BVK7"/>
<dbReference type="STRING" id="167542.P9515_06091"/>
<dbReference type="GeneID" id="60201469"/>
<dbReference type="KEGG" id="pmc:P9515_06091"/>
<dbReference type="eggNOG" id="COG2710">
    <property type="taxonomic scope" value="Bacteria"/>
</dbReference>
<dbReference type="HOGENOM" id="CLU_037170_0_0_3"/>
<dbReference type="OrthoDB" id="5714774at2"/>
<dbReference type="UniPathway" id="UPA00670"/>
<dbReference type="Proteomes" id="UP000001589">
    <property type="component" value="Chromosome"/>
</dbReference>
<dbReference type="GO" id="GO:0051539">
    <property type="term" value="F:4 iron, 4 sulfur cluster binding"/>
    <property type="evidence" value="ECO:0007669"/>
    <property type="project" value="UniProtKB-UniRule"/>
</dbReference>
<dbReference type="GO" id="GO:0005524">
    <property type="term" value="F:ATP binding"/>
    <property type="evidence" value="ECO:0007669"/>
    <property type="project" value="UniProtKB-UniRule"/>
</dbReference>
<dbReference type="GO" id="GO:0046872">
    <property type="term" value="F:metal ion binding"/>
    <property type="evidence" value="ECO:0007669"/>
    <property type="project" value="UniProtKB-KW"/>
</dbReference>
<dbReference type="GO" id="GO:0016730">
    <property type="term" value="F:oxidoreductase activity, acting on iron-sulfur proteins as donors"/>
    <property type="evidence" value="ECO:0007669"/>
    <property type="project" value="InterPro"/>
</dbReference>
<dbReference type="GO" id="GO:0016636">
    <property type="term" value="F:oxidoreductase activity, acting on the CH-CH group of donors, iron-sulfur protein as acceptor"/>
    <property type="evidence" value="ECO:0007669"/>
    <property type="project" value="UniProtKB-UniRule"/>
</dbReference>
<dbReference type="GO" id="GO:0036068">
    <property type="term" value="P:light-independent chlorophyll biosynthetic process"/>
    <property type="evidence" value="ECO:0007669"/>
    <property type="project" value="UniProtKB-UniRule"/>
</dbReference>
<dbReference type="GO" id="GO:0019685">
    <property type="term" value="P:photosynthesis, dark reaction"/>
    <property type="evidence" value="ECO:0007669"/>
    <property type="project" value="InterPro"/>
</dbReference>
<dbReference type="Gene3D" id="3.40.50.1980">
    <property type="entry name" value="Nitrogenase molybdenum iron protein domain"/>
    <property type="match status" value="3"/>
</dbReference>
<dbReference type="HAMAP" id="MF_00352">
    <property type="entry name" value="ChlN_BchN"/>
    <property type="match status" value="1"/>
</dbReference>
<dbReference type="InterPro" id="IPR050293">
    <property type="entry name" value="LIPOR_BchN/ChlN"/>
</dbReference>
<dbReference type="InterPro" id="IPR000510">
    <property type="entry name" value="Nase/OxRdtase_comp1"/>
</dbReference>
<dbReference type="InterPro" id="IPR005970">
    <property type="entry name" value="Protochl_reductN"/>
</dbReference>
<dbReference type="NCBIfam" id="TIGR01279">
    <property type="entry name" value="DPOR_bchN"/>
    <property type="match status" value="1"/>
</dbReference>
<dbReference type="NCBIfam" id="NF002768">
    <property type="entry name" value="PRK02842.1"/>
    <property type="match status" value="1"/>
</dbReference>
<dbReference type="PANTHER" id="PTHR39429">
    <property type="entry name" value="LIGHT-INDEPENDENT PROTOCHLOROPHYLLIDE REDUCTASE SUBUNIT N"/>
    <property type="match status" value="1"/>
</dbReference>
<dbReference type="PANTHER" id="PTHR39429:SF3">
    <property type="entry name" value="LIGHT-INDEPENDENT PROTOCHLOROPHYLLIDE REDUCTASE SUBUNIT N"/>
    <property type="match status" value="1"/>
</dbReference>
<dbReference type="Pfam" id="PF00148">
    <property type="entry name" value="Oxidored_nitro"/>
    <property type="match status" value="1"/>
</dbReference>
<dbReference type="PIRSF" id="PIRSF000162">
    <property type="entry name" value="P_chlorophyll_rd"/>
    <property type="match status" value="1"/>
</dbReference>
<dbReference type="SUPFAM" id="SSF53807">
    <property type="entry name" value="Helical backbone' metal receptor"/>
    <property type="match status" value="1"/>
</dbReference>